<protein>
    <recommendedName>
        <fullName evidence="1">2-dehydro-3-deoxyphosphooctonate aldolase</fullName>
        <ecNumber evidence="1">2.5.1.55</ecNumber>
    </recommendedName>
    <alternativeName>
        <fullName evidence="1">3-deoxy-D-manno-octulosonic acid 8-phosphate synthase</fullName>
    </alternativeName>
    <alternativeName>
        <fullName evidence="1">KDO-8-phosphate synthase</fullName>
        <shortName evidence="1">KDO 8-P synthase</shortName>
        <shortName evidence="1">KDOPS</shortName>
    </alternativeName>
    <alternativeName>
        <fullName evidence="1">Phospho-2-dehydro-3-deoxyoctonate aldolase</fullName>
    </alternativeName>
</protein>
<evidence type="ECO:0000255" key="1">
    <source>
        <dbReference type="HAMAP-Rule" id="MF_00056"/>
    </source>
</evidence>
<keyword id="KW-0963">Cytoplasm</keyword>
<keyword id="KW-0448">Lipopolysaccharide biosynthesis</keyword>
<keyword id="KW-0808">Transferase</keyword>
<feature type="chain" id="PRO_0000187103" description="2-dehydro-3-deoxyphosphooctonate aldolase">
    <location>
        <begin position="1"/>
        <end position="285"/>
    </location>
</feature>
<sequence>MMKACGFDIGLDHPFFLIAGPCVIESRELAFETAGRLKEITGKLGVSFIYKSSFDKANRSSGKSFRGPGMDEGLKILADVRAQLDVPVLTDVHDIDQVAPVAAVVDMLQTPAFLCRQTDFIRACAATLKPVNIKKGQFLAPHDMLQVARKARDAALEAGGDGNNILVCERGASFGYNNLVSDMRSLAIMRETDCPVVFDATHSVQLPGGQGASSGGQREFVPVLARAAVAVGVAGLFMETHPNPACAMSDGPNAVPLDRMAELLESLVALDRVTKRSGFLENQFV</sequence>
<name>KDSA_BORBR</name>
<reference key="1">
    <citation type="journal article" date="2003" name="Nat. Genet.">
        <title>Comparative analysis of the genome sequences of Bordetella pertussis, Bordetella parapertussis and Bordetella bronchiseptica.</title>
        <authorList>
            <person name="Parkhill J."/>
            <person name="Sebaihia M."/>
            <person name="Preston A."/>
            <person name="Murphy L.D."/>
            <person name="Thomson N.R."/>
            <person name="Harris D.E."/>
            <person name="Holden M.T.G."/>
            <person name="Churcher C.M."/>
            <person name="Bentley S.D."/>
            <person name="Mungall K.L."/>
            <person name="Cerdeno-Tarraga A.-M."/>
            <person name="Temple L."/>
            <person name="James K.D."/>
            <person name="Harris B."/>
            <person name="Quail M.A."/>
            <person name="Achtman M."/>
            <person name="Atkin R."/>
            <person name="Baker S."/>
            <person name="Basham D."/>
            <person name="Bason N."/>
            <person name="Cherevach I."/>
            <person name="Chillingworth T."/>
            <person name="Collins M."/>
            <person name="Cronin A."/>
            <person name="Davis P."/>
            <person name="Doggett J."/>
            <person name="Feltwell T."/>
            <person name="Goble A."/>
            <person name="Hamlin N."/>
            <person name="Hauser H."/>
            <person name="Holroyd S."/>
            <person name="Jagels K."/>
            <person name="Leather S."/>
            <person name="Moule S."/>
            <person name="Norberczak H."/>
            <person name="O'Neil S."/>
            <person name="Ormond D."/>
            <person name="Price C."/>
            <person name="Rabbinowitsch E."/>
            <person name="Rutter S."/>
            <person name="Sanders M."/>
            <person name="Saunders D."/>
            <person name="Seeger K."/>
            <person name="Sharp S."/>
            <person name="Simmonds M."/>
            <person name="Skelton J."/>
            <person name="Squares R."/>
            <person name="Squares S."/>
            <person name="Stevens K."/>
            <person name="Unwin L."/>
            <person name="Whitehead S."/>
            <person name="Barrell B.G."/>
            <person name="Maskell D.J."/>
        </authorList>
    </citation>
    <scope>NUCLEOTIDE SEQUENCE [LARGE SCALE GENOMIC DNA]</scope>
    <source>
        <strain>ATCC BAA-588 / NCTC 13252 / RB50</strain>
    </source>
</reference>
<proteinExistence type="inferred from homology"/>
<accession>Q7WD73</accession>
<dbReference type="EC" id="2.5.1.55" evidence="1"/>
<dbReference type="EMBL" id="BX640448">
    <property type="protein sequence ID" value="CAE35679.1"/>
    <property type="molecule type" value="Genomic_DNA"/>
</dbReference>
<dbReference type="SMR" id="Q7WD73"/>
<dbReference type="KEGG" id="bbr:BB3705"/>
<dbReference type="eggNOG" id="COG2877">
    <property type="taxonomic scope" value="Bacteria"/>
</dbReference>
<dbReference type="HOGENOM" id="CLU_036666_0_0_4"/>
<dbReference type="UniPathway" id="UPA00030"/>
<dbReference type="UniPathway" id="UPA00357">
    <property type="reaction ID" value="UER00474"/>
</dbReference>
<dbReference type="Proteomes" id="UP000001027">
    <property type="component" value="Chromosome"/>
</dbReference>
<dbReference type="GO" id="GO:0005737">
    <property type="term" value="C:cytoplasm"/>
    <property type="evidence" value="ECO:0007669"/>
    <property type="project" value="UniProtKB-SubCell"/>
</dbReference>
<dbReference type="GO" id="GO:0008676">
    <property type="term" value="F:3-deoxy-8-phosphooctulonate synthase activity"/>
    <property type="evidence" value="ECO:0007669"/>
    <property type="project" value="UniProtKB-UniRule"/>
</dbReference>
<dbReference type="GO" id="GO:0019294">
    <property type="term" value="P:keto-3-deoxy-D-manno-octulosonic acid biosynthetic process"/>
    <property type="evidence" value="ECO:0007669"/>
    <property type="project" value="UniProtKB-UniRule"/>
</dbReference>
<dbReference type="Gene3D" id="3.20.20.70">
    <property type="entry name" value="Aldolase class I"/>
    <property type="match status" value="1"/>
</dbReference>
<dbReference type="HAMAP" id="MF_00056">
    <property type="entry name" value="KDO8P_synth"/>
    <property type="match status" value="1"/>
</dbReference>
<dbReference type="InterPro" id="IPR013785">
    <property type="entry name" value="Aldolase_TIM"/>
</dbReference>
<dbReference type="InterPro" id="IPR006218">
    <property type="entry name" value="DAHP1/KDSA"/>
</dbReference>
<dbReference type="InterPro" id="IPR006269">
    <property type="entry name" value="KDO8P_synthase"/>
</dbReference>
<dbReference type="NCBIfam" id="TIGR01362">
    <property type="entry name" value="KDO8P_synth"/>
    <property type="match status" value="1"/>
</dbReference>
<dbReference type="NCBIfam" id="NF003543">
    <property type="entry name" value="PRK05198.1"/>
    <property type="match status" value="1"/>
</dbReference>
<dbReference type="PANTHER" id="PTHR21057">
    <property type="entry name" value="PHOSPHO-2-DEHYDRO-3-DEOXYHEPTONATE ALDOLASE"/>
    <property type="match status" value="1"/>
</dbReference>
<dbReference type="Pfam" id="PF00793">
    <property type="entry name" value="DAHP_synth_1"/>
    <property type="match status" value="1"/>
</dbReference>
<dbReference type="SUPFAM" id="SSF51569">
    <property type="entry name" value="Aldolase"/>
    <property type="match status" value="1"/>
</dbReference>
<organism>
    <name type="scientific">Bordetella bronchiseptica (strain ATCC BAA-588 / NCTC 13252 / RB50)</name>
    <name type="common">Alcaligenes bronchisepticus</name>
    <dbReference type="NCBI Taxonomy" id="257310"/>
    <lineage>
        <taxon>Bacteria</taxon>
        <taxon>Pseudomonadati</taxon>
        <taxon>Pseudomonadota</taxon>
        <taxon>Betaproteobacteria</taxon>
        <taxon>Burkholderiales</taxon>
        <taxon>Alcaligenaceae</taxon>
        <taxon>Bordetella</taxon>
    </lineage>
</organism>
<comment type="catalytic activity">
    <reaction evidence="1">
        <text>D-arabinose 5-phosphate + phosphoenolpyruvate + H2O = 3-deoxy-alpha-D-manno-2-octulosonate-8-phosphate + phosphate</text>
        <dbReference type="Rhea" id="RHEA:14053"/>
        <dbReference type="ChEBI" id="CHEBI:15377"/>
        <dbReference type="ChEBI" id="CHEBI:43474"/>
        <dbReference type="ChEBI" id="CHEBI:57693"/>
        <dbReference type="ChEBI" id="CHEBI:58702"/>
        <dbReference type="ChEBI" id="CHEBI:85985"/>
        <dbReference type="EC" id="2.5.1.55"/>
    </reaction>
</comment>
<comment type="pathway">
    <text evidence="1">Carbohydrate biosynthesis; 3-deoxy-D-manno-octulosonate biosynthesis; 3-deoxy-D-manno-octulosonate from D-ribulose 5-phosphate: step 2/3.</text>
</comment>
<comment type="pathway">
    <text evidence="1">Bacterial outer membrane biogenesis; lipopolysaccharide biosynthesis.</text>
</comment>
<comment type="subcellular location">
    <subcellularLocation>
        <location evidence="1">Cytoplasm</location>
    </subcellularLocation>
</comment>
<comment type="similarity">
    <text evidence="1">Belongs to the KdsA family.</text>
</comment>
<gene>
    <name evidence="1" type="primary">kdsA</name>
    <name type="ordered locus">BB3705</name>
</gene>